<reference key="1">
    <citation type="journal article" date="2011" name="J. Bacteriol.">
        <title>Complete genome sequence and updated annotation of Desulfovibrio alaskensis G20.</title>
        <authorList>
            <person name="Hauser L.J."/>
            <person name="Land M.L."/>
            <person name="Brown S.D."/>
            <person name="Larimer F."/>
            <person name="Keller K.L."/>
            <person name="Rapp-Giles B.J."/>
            <person name="Price M.N."/>
            <person name="Lin M."/>
            <person name="Bruce D.C."/>
            <person name="Detter J.C."/>
            <person name="Tapia R."/>
            <person name="Han C.S."/>
            <person name="Goodwin L.A."/>
            <person name="Cheng J.F."/>
            <person name="Pitluck S."/>
            <person name="Copeland A."/>
            <person name="Lucas S."/>
            <person name="Nolan M."/>
            <person name="Lapidus A.L."/>
            <person name="Palumbo A.V."/>
            <person name="Wall J.D."/>
        </authorList>
    </citation>
    <scope>NUCLEOTIDE SEQUENCE [LARGE SCALE GENOMIC DNA]</scope>
    <source>
        <strain>ATCC BAA-1058 / DSM 17464 / G20</strain>
    </source>
</reference>
<dbReference type="EMBL" id="CP000112">
    <property type="protein sequence ID" value="ABB39950.1"/>
    <property type="molecule type" value="Genomic_DNA"/>
</dbReference>
<dbReference type="RefSeq" id="WP_011368904.1">
    <property type="nucleotide sequence ID" value="NC_007519.1"/>
</dbReference>
<dbReference type="SMR" id="Q30WJ6"/>
<dbReference type="STRING" id="207559.Dde_3156"/>
<dbReference type="KEGG" id="dde:Dde_3156"/>
<dbReference type="eggNOG" id="COG2063">
    <property type="taxonomic scope" value="Bacteria"/>
</dbReference>
<dbReference type="HOGENOM" id="CLU_069313_1_1_7"/>
<dbReference type="Proteomes" id="UP000002710">
    <property type="component" value="Chromosome"/>
</dbReference>
<dbReference type="GO" id="GO:0009427">
    <property type="term" value="C:bacterial-type flagellum basal body, distal rod, L ring"/>
    <property type="evidence" value="ECO:0007669"/>
    <property type="project" value="InterPro"/>
</dbReference>
<dbReference type="GO" id="GO:0009279">
    <property type="term" value="C:cell outer membrane"/>
    <property type="evidence" value="ECO:0007669"/>
    <property type="project" value="UniProtKB-SubCell"/>
</dbReference>
<dbReference type="GO" id="GO:0003774">
    <property type="term" value="F:cytoskeletal motor activity"/>
    <property type="evidence" value="ECO:0007669"/>
    <property type="project" value="InterPro"/>
</dbReference>
<dbReference type="GO" id="GO:0071973">
    <property type="term" value="P:bacterial-type flagellum-dependent cell motility"/>
    <property type="evidence" value="ECO:0007669"/>
    <property type="project" value="InterPro"/>
</dbReference>
<dbReference type="HAMAP" id="MF_00415">
    <property type="entry name" value="FlgH"/>
    <property type="match status" value="1"/>
</dbReference>
<dbReference type="InterPro" id="IPR000527">
    <property type="entry name" value="Flag_Lring"/>
</dbReference>
<dbReference type="NCBIfam" id="NF009336">
    <property type="entry name" value="PRK12696.1"/>
    <property type="match status" value="1"/>
</dbReference>
<dbReference type="PANTHER" id="PTHR34933">
    <property type="entry name" value="FLAGELLAR L-RING PROTEIN"/>
    <property type="match status" value="1"/>
</dbReference>
<dbReference type="PANTHER" id="PTHR34933:SF1">
    <property type="entry name" value="FLAGELLAR L-RING PROTEIN"/>
    <property type="match status" value="1"/>
</dbReference>
<dbReference type="Pfam" id="PF02107">
    <property type="entry name" value="FlgH"/>
    <property type="match status" value="1"/>
</dbReference>
<dbReference type="PRINTS" id="PR01008">
    <property type="entry name" value="FLGLRINGFLGH"/>
</dbReference>
<dbReference type="PROSITE" id="PS51257">
    <property type="entry name" value="PROKAR_LIPOPROTEIN"/>
    <property type="match status" value="1"/>
</dbReference>
<feature type="signal peptide" evidence="1">
    <location>
        <begin position="1"/>
        <end position="15"/>
    </location>
</feature>
<feature type="chain" id="PRO_0000236821" description="Flagellar L-ring protein">
    <location>
        <begin position="16"/>
        <end position="234"/>
    </location>
</feature>
<feature type="lipid moiety-binding region" description="N-palmitoyl cysteine" evidence="1">
    <location>
        <position position="16"/>
    </location>
</feature>
<feature type="lipid moiety-binding region" description="S-diacylglycerol cysteine" evidence="1">
    <location>
        <position position="16"/>
    </location>
</feature>
<organism>
    <name type="scientific">Oleidesulfovibrio alaskensis (strain ATCC BAA-1058 / DSM 17464 / G20)</name>
    <name type="common">Desulfovibrio alaskensis</name>
    <dbReference type="NCBI Taxonomy" id="207559"/>
    <lineage>
        <taxon>Bacteria</taxon>
        <taxon>Pseudomonadati</taxon>
        <taxon>Thermodesulfobacteriota</taxon>
        <taxon>Desulfovibrionia</taxon>
        <taxon>Desulfovibrionales</taxon>
        <taxon>Desulfovibrionaceae</taxon>
        <taxon>Oleidesulfovibrio</taxon>
    </lineage>
</organism>
<comment type="function">
    <text evidence="1">Assembles around the rod to form the L-ring and probably protects the motor/basal body from shearing forces during rotation.</text>
</comment>
<comment type="subunit">
    <text evidence="1">The basal body constitutes a major portion of the flagellar organelle and consists of four rings (L,P,S, and M) mounted on a central rod.</text>
</comment>
<comment type="subcellular location">
    <subcellularLocation>
        <location evidence="1">Cell outer membrane</location>
        <topology evidence="1">Lipid-anchor</topology>
    </subcellularLocation>
    <subcellularLocation>
        <location evidence="1">Bacterial flagellum basal body</location>
    </subcellularLocation>
</comment>
<comment type="similarity">
    <text evidence="1">Belongs to the FlgH family.</text>
</comment>
<accession>Q30WJ6</accession>
<keyword id="KW-0975">Bacterial flagellum</keyword>
<keyword id="KW-0998">Cell outer membrane</keyword>
<keyword id="KW-0449">Lipoprotein</keyword>
<keyword id="KW-0472">Membrane</keyword>
<keyword id="KW-0564">Palmitate</keyword>
<keyword id="KW-1185">Reference proteome</keyword>
<keyword id="KW-0732">Signal</keyword>
<sequence>MRYAVICMLLLAASGCTAARQAPSPEPGLVPPPVVTTPEEKAENPGSLFSDENADLLYADYRARRVGDIVLINIVENSKAENKASTSTNKESTGEYGVSSFFDRSKVGIIPGQTLLSGRTGDVPLLKFSSVSDFSGDGETTRENTVTATIAARVTRVLPGGLMQVEGSRETRVNEETQIVTVSGLVRTSDVADDNSVMSTQMADARISYYGKGVISDKQRVGWFTRLMDNLWPF</sequence>
<proteinExistence type="inferred from homology"/>
<name>FLGH_OLEA2</name>
<protein>
    <recommendedName>
        <fullName evidence="1">Flagellar L-ring protein</fullName>
    </recommendedName>
    <alternativeName>
        <fullName evidence="1">Basal body L-ring protein</fullName>
    </alternativeName>
</protein>
<evidence type="ECO:0000255" key="1">
    <source>
        <dbReference type="HAMAP-Rule" id="MF_00415"/>
    </source>
</evidence>
<gene>
    <name evidence="1" type="primary">flgH</name>
    <name type="ordered locus">Dde_3156</name>
</gene>